<comment type="function">
    <text>Actins are highly conserved proteins that are involved in various types of cell motility and are ubiquitously expressed in all eukaryotic cells.</text>
</comment>
<comment type="catalytic activity">
    <reaction evidence="6">
        <text>ATP + H2O = ADP + phosphate + H(+)</text>
        <dbReference type="Rhea" id="RHEA:13065"/>
        <dbReference type="ChEBI" id="CHEBI:15377"/>
        <dbReference type="ChEBI" id="CHEBI:15378"/>
        <dbReference type="ChEBI" id="CHEBI:30616"/>
        <dbReference type="ChEBI" id="CHEBI:43474"/>
        <dbReference type="ChEBI" id="CHEBI:456216"/>
    </reaction>
</comment>
<comment type="subcellular location">
    <subcellularLocation>
        <location>Cytoplasm</location>
        <location>Cytoskeleton</location>
    </subcellularLocation>
</comment>
<comment type="PTM">
    <text evidence="4">Oxidation of Met-45 and Met-48 by MICALs (MICAL1, MICAL2 or MICAL3) to form methionine sulfoxide promotes actin filament depolymerization. MICAL1 and MICAL2 produce the (R)-S-oxide form. The (R)-S-oxide form is reverted by MSRB1 and MSRB2, which promotes actin repolymerization.</text>
</comment>
<comment type="PTM">
    <text evidence="3">Monomethylation at Lys-85 (K85me1) regulates actin-myosin interaction and actomyosin-dependent processes. Demethylation by ALKBH4 is required for maintaining actomyosin dynamics supporting normal cleavage furrow ingression during cytokinesis and cell migration.</text>
</comment>
<comment type="similarity">
    <text evidence="7">Belongs to the actin family.</text>
</comment>
<feature type="initiator methionine" description="Removed">
    <location>
        <position position="1"/>
    </location>
</feature>
<feature type="chain" id="PRO_0000443008" description="Actin, cytoplasmic, intermediate form" evidence="1">
    <location>
        <begin position="2"/>
        <end position="376"/>
    </location>
</feature>
<feature type="chain" id="PRO_0000000629" description="Actin, cytoplasmic" evidence="5">
    <location>
        <begin position="3"/>
        <end position="376"/>
    </location>
</feature>
<feature type="modified residue" description="N-acetylcysteine; in intermediate form" evidence="1">
    <location>
        <position position="2"/>
    </location>
</feature>
<feature type="modified residue" description="N-acetylaspartate; in Actin, cytoplasmic" evidence="5">
    <location>
        <position position="3"/>
    </location>
</feature>
<feature type="modified residue" description="Methionine (R)-sulfoxide" evidence="4">
    <location>
        <position position="45"/>
    </location>
</feature>
<feature type="modified residue" description="Methionine (R)-sulfoxide" evidence="4">
    <location>
        <position position="48"/>
    </location>
</feature>
<feature type="modified residue" description="Tele-methylhistidine" evidence="2">
    <location>
        <position position="74"/>
    </location>
</feature>
<feature type="modified residue" description="N6-methyllysine" evidence="3">
    <location>
        <position position="85"/>
    </location>
</feature>
<name>ACTC_BIOPF</name>
<sequence length="376" mass="41870">MCDEDVAALVVDNGSGMCKAGFAGDDAPRAVFPSIVGRPRHQGVMVGMGQKDSYVGDEAQSKRGILTLKYPIEHGIVTNWDDMEKIWHHTFYNELRVAPEEHPVLLTEAPLNPKANREKMTQIMFETFNTPAMYVAIQAVLSLYASGRTTGIVLDSGDGVTHTVPIYEGYALPHAIMRLDLAGRDLTDYLMKILTERGYSFTTTAEREIVRDIKEKLCYVALDFEQEMHTAATSSSLEKSYELPDGQVITIGNERFRCPEAVFQPSFLGMESAGIHETTYNSIMKCDVDIRKDLYANTVLSGGSTMFPGIADRMQKEITALAPPTMKIKIIAPPERKYSVWIGGSILASLSTFQQMWISKQEYDESGPSIVHRKCF</sequence>
<reference key="1">
    <citation type="journal article" date="2002" name="J. Molluscan Stud.">
        <title>Comparative study of cytoplasmic actin DNA from six species of Planorbidae (Gastropoda: Basommatophora).</title>
        <authorList>
            <person name="Adema C.M."/>
        </authorList>
    </citation>
    <scope>NUCLEOTIDE SEQUENCE [GENOMIC DNA]</scope>
</reference>
<accession>Q964E2</accession>
<proteinExistence type="inferred from homology"/>
<keyword id="KW-0007">Acetylation</keyword>
<keyword id="KW-0067">ATP-binding</keyword>
<keyword id="KW-0963">Cytoplasm</keyword>
<keyword id="KW-0206">Cytoskeleton</keyword>
<keyword id="KW-0378">Hydrolase</keyword>
<keyword id="KW-0488">Methylation</keyword>
<keyword id="KW-0547">Nucleotide-binding</keyword>
<keyword id="KW-0558">Oxidation</keyword>
<protein>
    <recommendedName>
        <fullName>Actin, cytoplasmic</fullName>
        <ecNumber evidence="6">3.6.4.-</ecNumber>
    </recommendedName>
    <component>
        <recommendedName>
            <fullName>Actin, cytoplasmic, intermediate form</fullName>
        </recommendedName>
    </component>
</protein>
<dbReference type="EC" id="3.6.4.-" evidence="6"/>
<dbReference type="EMBL" id="AF329438">
    <property type="protein sequence ID" value="AAK68712.1"/>
    <property type="molecule type" value="Genomic_DNA"/>
</dbReference>
<dbReference type="SMR" id="Q964E2"/>
<dbReference type="GO" id="GO:0005737">
    <property type="term" value="C:cytoplasm"/>
    <property type="evidence" value="ECO:0007669"/>
    <property type="project" value="UniProtKB-KW"/>
</dbReference>
<dbReference type="GO" id="GO:0005856">
    <property type="term" value="C:cytoskeleton"/>
    <property type="evidence" value="ECO:0007669"/>
    <property type="project" value="UniProtKB-SubCell"/>
</dbReference>
<dbReference type="GO" id="GO:0005524">
    <property type="term" value="F:ATP binding"/>
    <property type="evidence" value="ECO:0007669"/>
    <property type="project" value="UniProtKB-KW"/>
</dbReference>
<dbReference type="GO" id="GO:0016787">
    <property type="term" value="F:hydrolase activity"/>
    <property type="evidence" value="ECO:0007669"/>
    <property type="project" value="UniProtKB-KW"/>
</dbReference>
<dbReference type="CDD" id="cd10224">
    <property type="entry name" value="ASKHA_NBD_actin"/>
    <property type="match status" value="1"/>
</dbReference>
<dbReference type="FunFam" id="2.30.36.70:FF:000001">
    <property type="entry name" value="Actin, alpha skeletal muscle"/>
    <property type="match status" value="1"/>
</dbReference>
<dbReference type="FunFam" id="3.30.420.40:FF:000131">
    <property type="entry name" value="Actin, alpha skeletal muscle"/>
    <property type="match status" value="1"/>
</dbReference>
<dbReference type="FunFam" id="3.30.420.40:FF:000291">
    <property type="entry name" value="Actin, alpha skeletal muscle"/>
    <property type="match status" value="1"/>
</dbReference>
<dbReference type="FunFam" id="3.90.640.10:FF:000047">
    <property type="entry name" value="Actin, alpha skeletal muscle"/>
    <property type="match status" value="1"/>
</dbReference>
<dbReference type="FunFam" id="3.30.420.40:FF:000058">
    <property type="entry name" value="Putative actin-related protein 5"/>
    <property type="match status" value="1"/>
</dbReference>
<dbReference type="Gene3D" id="3.30.420.40">
    <property type="match status" value="2"/>
</dbReference>
<dbReference type="Gene3D" id="3.90.640.10">
    <property type="entry name" value="Actin, Chain A, domain 4"/>
    <property type="match status" value="1"/>
</dbReference>
<dbReference type="InterPro" id="IPR004000">
    <property type="entry name" value="Actin"/>
</dbReference>
<dbReference type="InterPro" id="IPR020902">
    <property type="entry name" value="Actin/actin-like_CS"/>
</dbReference>
<dbReference type="InterPro" id="IPR004001">
    <property type="entry name" value="Actin_CS"/>
</dbReference>
<dbReference type="InterPro" id="IPR043129">
    <property type="entry name" value="ATPase_NBD"/>
</dbReference>
<dbReference type="PANTHER" id="PTHR11937">
    <property type="entry name" value="ACTIN"/>
    <property type="match status" value="1"/>
</dbReference>
<dbReference type="Pfam" id="PF00022">
    <property type="entry name" value="Actin"/>
    <property type="match status" value="1"/>
</dbReference>
<dbReference type="PRINTS" id="PR00190">
    <property type="entry name" value="ACTIN"/>
</dbReference>
<dbReference type="SMART" id="SM00268">
    <property type="entry name" value="ACTIN"/>
    <property type="match status" value="1"/>
</dbReference>
<dbReference type="SUPFAM" id="SSF53067">
    <property type="entry name" value="Actin-like ATPase domain"/>
    <property type="match status" value="2"/>
</dbReference>
<dbReference type="PROSITE" id="PS00406">
    <property type="entry name" value="ACTINS_1"/>
    <property type="match status" value="1"/>
</dbReference>
<dbReference type="PROSITE" id="PS00432">
    <property type="entry name" value="ACTINS_2"/>
    <property type="match status" value="1"/>
</dbReference>
<dbReference type="PROSITE" id="PS01132">
    <property type="entry name" value="ACTINS_ACT_LIKE"/>
    <property type="match status" value="1"/>
</dbReference>
<organism>
    <name type="scientific">Biomphalaria pfeifferi</name>
    <name type="common">Bloodfluke planorb</name>
    <name type="synonym">Freshwater snail</name>
    <dbReference type="NCBI Taxonomy" id="112525"/>
    <lineage>
        <taxon>Eukaryota</taxon>
        <taxon>Metazoa</taxon>
        <taxon>Spiralia</taxon>
        <taxon>Lophotrochozoa</taxon>
        <taxon>Mollusca</taxon>
        <taxon>Gastropoda</taxon>
        <taxon>Heterobranchia</taxon>
        <taxon>Euthyneura</taxon>
        <taxon>Panpulmonata</taxon>
        <taxon>Hygrophila</taxon>
        <taxon>Lymnaeoidea</taxon>
        <taxon>Planorbidae</taxon>
        <taxon>Biomphalaria</taxon>
    </lineage>
</organism>
<evidence type="ECO:0000250" key="1">
    <source>
        <dbReference type="UniProtKB" id="P62737"/>
    </source>
</evidence>
<evidence type="ECO:0000250" key="2">
    <source>
        <dbReference type="UniProtKB" id="P62739"/>
    </source>
</evidence>
<evidence type="ECO:0000250" key="3">
    <source>
        <dbReference type="UniProtKB" id="P68032"/>
    </source>
</evidence>
<evidence type="ECO:0000250" key="4">
    <source>
        <dbReference type="UniProtKB" id="P68033"/>
    </source>
</evidence>
<evidence type="ECO:0000250" key="5">
    <source>
        <dbReference type="UniProtKB" id="P68135"/>
    </source>
</evidence>
<evidence type="ECO:0000250" key="6">
    <source>
        <dbReference type="UniProtKB" id="P68137"/>
    </source>
</evidence>
<evidence type="ECO:0000305" key="7"/>